<accession>A9ER52</accession>
<reference key="1">
    <citation type="journal article" date="2007" name="Nat. Biotechnol.">
        <title>Complete genome sequence of the myxobacterium Sorangium cellulosum.</title>
        <authorList>
            <person name="Schneiker S."/>
            <person name="Perlova O."/>
            <person name="Kaiser O."/>
            <person name="Gerth K."/>
            <person name="Alici A."/>
            <person name="Altmeyer M.O."/>
            <person name="Bartels D."/>
            <person name="Bekel T."/>
            <person name="Beyer S."/>
            <person name="Bode E."/>
            <person name="Bode H.B."/>
            <person name="Bolten C.J."/>
            <person name="Choudhuri J.V."/>
            <person name="Doss S."/>
            <person name="Elnakady Y.A."/>
            <person name="Frank B."/>
            <person name="Gaigalat L."/>
            <person name="Goesmann A."/>
            <person name="Groeger C."/>
            <person name="Gross F."/>
            <person name="Jelsbak L."/>
            <person name="Jelsbak L."/>
            <person name="Kalinowski J."/>
            <person name="Kegler C."/>
            <person name="Knauber T."/>
            <person name="Konietzny S."/>
            <person name="Kopp M."/>
            <person name="Krause L."/>
            <person name="Krug D."/>
            <person name="Linke B."/>
            <person name="Mahmud T."/>
            <person name="Martinez-Arias R."/>
            <person name="McHardy A.C."/>
            <person name="Merai M."/>
            <person name="Meyer F."/>
            <person name="Mormann S."/>
            <person name="Munoz-Dorado J."/>
            <person name="Perez J."/>
            <person name="Pradella S."/>
            <person name="Rachid S."/>
            <person name="Raddatz G."/>
            <person name="Rosenau F."/>
            <person name="Rueckert C."/>
            <person name="Sasse F."/>
            <person name="Scharfe M."/>
            <person name="Schuster S.C."/>
            <person name="Suen G."/>
            <person name="Treuner-Lange A."/>
            <person name="Velicer G.J."/>
            <person name="Vorholter F.-J."/>
            <person name="Weissman K.J."/>
            <person name="Welch R.D."/>
            <person name="Wenzel S.C."/>
            <person name="Whitworth D.E."/>
            <person name="Wilhelm S."/>
            <person name="Wittmann C."/>
            <person name="Bloecker H."/>
            <person name="Puehler A."/>
            <person name="Mueller R."/>
        </authorList>
    </citation>
    <scope>NUCLEOTIDE SEQUENCE [LARGE SCALE GENOMIC DNA]</scope>
    <source>
        <strain>So ce56</strain>
    </source>
</reference>
<organism>
    <name type="scientific">Sorangium cellulosum (strain So ce56)</name>
    <name type="common">Polyangium cellulosum (strain So ce56)</name>
    <dbReference type="NCBI Taxonomy" id="448385"/>
    <lineage>
        <taxon>Bacteria</taxon>
        <taxon>Pseudomonadati</taxon>
        <taxon>Myxococcota</taxon>
        <taxon>Polyangia</taxon>
        <taxon>Polyangiales</taxon>
        <taxon>Polyangiaceae</taxon>
        <taxon>Sorangium</taxon>
    </lineage>
</organism>
<sequence>MEPRYPFVAVDVPEPEADEIGALLFELGASGVEQRDEQTLVRGARSGQVTLVASFEDHGEAMEAIAALGEQSPPLAARLEEVVGDAWRDAWKEHFAPFALTPTITVVPPWAERAPEREGERVLLLEPGRAFGTGLHATTALVAELLDEHAAELRGREILDVGTGSGILALVALLLGAERAVAIDNDEDVIEVVLENAARNGLEGRIEASAGVVEAVTRRFPWVVANIEARVLRPLAPELARVLEPGGWLILSGILESERDDLIARYTSLPRPLEHVATRPDPASPGGDRRAGRGDAGGEGWVAILFRAPGGAASSPG</sequence>
<feature type="chain" id="PRO_1000212757" description="Ribosomal protein L11 methyltransferase">
    <location>
        <begin position="1"/>
        <end position="317"/>
    </location>
</feature>
<feature type="region of interest" description="Disordered" evidence="2">
    <location>
        <begin position="274"/>
        <end position="297"/>
    </location>
</feature>
<feature type="binding site" evidence="1">
    <location>
        <position position="139"/>
    </location>
    <ligand>
        <name>S-adenosyl-L-methionine</name>
        <dbReference type="ChEBI" id="CHEBI:59789"/>
    </ligand>
</feature>
<feature type="binding site" evidence="1">
    <location>
        <position position="162"/>
    </location>
    <ligand>
        <name>S-adenosyl-L-methionine</name>
        <dbReference type="ChEBI" id="CHEBI:59789"/>
    </ligand>
</feature>
<feature type="binding site" evidence="1">
    <location>
        <position position="184"/>
    </location>
    <ligand>
        <name>S-adenosyl-L-methionine</name>
        <dbReference type="ChEBI" id="CHEBI:59789"/>
    </ligand>
</feature>
<feature type="binding site" evidence="1">
    <location>
        <position position="226"/>
    </location>
    <ligand>
        <name>S-adenosyl-L-methionine</name>
        <dbReference type="ChEBI" id="CHEBI:59789"/>
    </ligand>
</feature>
<protein>
    <recommendedName>
        <fullName evidence="1">Ribosomal protein L11 methyltransferase</fullName>
        <shortName evidence="1">L11 Mtase</shortName>
        <ecNumber evidence="1">2.1.1.-</ecNumber>
    </recommendedName>
</protein>
<evidence type="ECO:0000255" key="1">
    <source>
        <dbReference type="HAMAP-Rule" id="MF_00735"/>
    </source>
</evidence>
<evidence type="ECO:0000256" key="2">
    <source>
        <dbReference type="SAM" id="MobiDB-lite"/>
    </source>
</evidence>
<dbReference type="EC" id="2.1.1.-" evidence="1"/>
<dbReference type="EMBL" id="AM746676">
    <property type="protein sequence ID" value="CAN97261.1"/>
    <property type="molecule type" value="Genomic_DNA"/>
</dbReference>
<dbReference type="RefSeq" id="WP_012239700.1">
    <property type="nucleotide sequence ID" value="NC_010162.1"/>
</dbReference>
<dbReference type="SMR" id="A9ER52"/>
<dbReference type="STRING" id="448385.sce7092"/>
<dbReference type="KEGG" id="scl:sce7092"/>
<dbReference type="eggNOG" id="COG2264">
    <property type="taxonomic scope" value="Bacteria"/>
</dbReference>
<dbReference type="HOGENOM" id="CLU_049382_0_1_7"/>
<dbReference type="OrthoDB" id="9785995at2"/>
<dbReference type="BioCyc" id="SCEL448385:SCE_RS36370-MONOMER"/>
<dbReference type="Proteomes" id="UP000002139">
    <property type="component" value="Chromosome"/>
</dbReference>
<dbReference type="GO" id="GO:0005737">
    <property type="term" value="C:cytoplasm"/>
    <property type="evidence" value="ECO:0007669"/>
    <property type="project" value="UniProtKB-SubCell"/>
</dbReference>
<dbReference type="GO" id="GO:0016279">
    <property type="term" value="F:protein-lysine N-methyltransferase activity"/>
    <property type="evidence" value="ECO:0007669"/>
    <property type="project" value="RHEA"/>
</dbReference>
<dbReference type="GO" id="GO:0032259">
    <property type="term" value="P:methylation"/>
    <property type="evidence" value="ECO:0007669"/>
    <property type="project" value="UniProtKB-KW"/>
</dbReference>
<dbReference type="CDD" id="cd02440">
    <property type="entry name" value="AdoMet_MTases"/>
    <property type="match status" value="1"/>
</dbReference>
<dbReference type="Gene3D" id="3.40.50.150">
    <property type="entry name" value="Vaccinia Virus protein VP39"/>
    <property type="match status" value="1"/>
</dbReference>
<dbReference type="HAMAP" id="MF_00735">
    <property type="entry name" value="Methyltr_PrmA"/>
    <property type="match status" value="1"/>
</dbReference>
<dbReference type="InterPro" id="IPR050078">
    <property type="entry name" value="Ribosomal_L11_MeTrfase_PrmA"/>
</dbReference>
<dbReference type="InterPro" id="IPR004498">
    <property type="entry name" value="Ribosomal_PrmA_MeTrfase"/>
</dbReference>
<dbReference type="InterPro" id="IPR029063">
    <property type="entry name" value="SAM-dependent_MTases_sf"/>
</dbReference>
<dbReference type="PANTHER" id="PTHR43648">
    <property type="entry name" value="ELECTRON TRANSFER FLAVOPROTEIN BETA SUBUNIT LYSINE METHYLTRANSFERASE"/>
    <property type="match status" value="1"/>
</dbReference>
<dbReference type="PANTHER" id="PTHR43648:SF1">
    <property type="entry name" value="ELECTRON TRANSFER FLAVOPROTEIN BETA SUBUNIT LYSINE METHYLTRANSFERASE"/>
    <property type="match status" value="1"/>
</dbReference>
<dbReference type="Pfam" id="PF06325">
    <property type="entry name" value="PrmA"/>
    <property type="match status" value="1"/>
</dbReference>
<dbReference type="SUPFAM" id="SSF53335">
    <property type="entry name" value="S-adenosyl-L-methionine-dependent methyltransferases"/>
    <property type="match status" value="1"/>
</dbReference>
<gene>
    <name evidence="1" type="primary">prmA</name>
    <name type="ordered locus">sce7092</name>
</gene>
<name>PRMA_SORC5</name>
<keyword id="KW-0963">Cytoplasm</keyword>
<keyword id="KW-0489">Methyltransferase</keyword>
<keyword id="KW-1185">Reference proteome</keyword>
<keyword id="KW-0949">S-adenosyl-L-methionine</keyword>
<keyword id="KW-0808">Transferase</keyword>
<proteinExistence type="inferred from homology"/>
<comment type="function">
    <text evidence="1">Methylates ribosomal protein L11.</text>
</comment>
<comment type="catalytic activity">
    <reaction evidence="1">
        <text>L-lysyl-[protein] + 3 S-adenosyl-L-methionine = N(6),N(6),N(6)-trimethyl-L-lysyl-[protein] + 3 S-adenosyl-L-homocysteine + 3 H(+)</text>
        <dbReference type="Rhea" id="RHEA:54192"/>
        <dbReference type="Rhea" id="RHEA-COMP:9752"/>
        <dbReference type="Rhea" id="RHEA-COMP:13826"/>
        <dbReference type="ChEBI" id="CHEBI:15378"/>
        <dbReference type="ChEBI" id="CHEBI:29969"/>
        <dbReference type="ChEBI" id="CHEBI:57856"/>
        <dbReference type="ChEBI" id="CHEBI:59789"/>
        <dbReference type="ChEBI" id="CHEBI:61961"/>
    </reaction>
</comment>
<comment type="subcellular location">
    <subcellularLocation>
        <location evidence="1">Cytoplasm</location>
    </subcellularLocation>
</comment>
<comment type="similarity">
    <text evidence="1">Belongs to the methyltransferase superfamily. PrmA family.</text>
</comment>